<sequence length="484" mass="56289">MSDRIRVRYAPSPTGYLHIGNARTALFNYLYAKHYNGDFVIRIEDTDKKRNLEDGETSQFDNLKWLGLDWDESVDKDNGYGPYRQSERQHIYQPLIDQLLAEDKAYKCYMTEEELEAEREAQIARGEMPRYGGQHAHLTEEQRQQFEAEGRQPSIRFRVPQNQTYSFDDMVKGNISFDSNGIGDWVIVKKDGIPTYNFAVAIDDHYMQISDVIRGDDHISNTPKQIMIYEAFGWEPPRFGHMSLIVNEERKKLSKRDGQILQFIEQYRDLGYLPEALFNFIALLGWSPEGEEEIFSKEEFIKIFDEKRLSKSPAFFDKQKLAWVNNQYMKQKDTETVFQLALPHLIKANLIPEVPSEEDLSWGRKLIALYQKEMSYAGEIVPLSEMFFKEMPALGEEEQQVINGEQVPELMTHLFSKLEALEPFEAAEIKKTIKEVQKETGIKGKQLFMPIRVAVTGQMHGPELPNTIEVLGKEKVLNRLKQYK</sequence>
<protein>
    <recommendedName>
        <fullName evidence="1">Glutamate--tRNA ligase</fullName>
        <ecNumber evidence="1">6.1.1.17</ecNumber>
    </recommendedName>
    <alternativeName>
        <fullName evidence="1">Glutamyl-tRNA synthetase</fullName>
        <shortName evidence="1">GluRS</shortName>
    </alternativeName>
</protein>
<accession>Q6GBW0</accession>
<dbReference type="EC" id="6.1.1.17" evidence="1"/>
<dbReference type="EMBL" id="BX571857">
    <property type="protein sequence ID" value="CAG42260.1"/>
    <property type="molecule type" value="Genomic_DNA"/>
</dbReference>
<dbReference type="RefSeq" id="WP_001283792.1">
    <property type="nucleotide sequence ID" value="NC_002953.3"/>
</dbReference>
<dbReference type="SMR" id="Q6GBW0"/>
<dbReference type="KEGG" id="sas:SAS0485"/>
<dbReference type="HOGENOM" id="CLU_015768_6_1_9"/>
<dbReference type="GO" id="GO:0005829">
    <property type="term" value="C:cytosol"/>
    <property type="evidence" value="ECO:0007669"/>
    <property type="project" value="TreeGrafter"/>
</dbReference>
<dbReference type="GO" id="GO:0005524">
    <property type="term" value="F:ATP binding"/>
    <property type="evidence" value="ECO:0007669"/>
    <property type="project" value="UniProtKB-UniRule"/>
</dbReference>
<dbReference type="GO" id="GO:0004818">
    <property type="term" value="F:glutamate-tRNA ligase activity"/>
    <property type="evidence" value="ECO:0007669"/>
    <property type="project" value="UniProtKB-UniRule"/>
</dbReference>
<dbReference type="GO" id="GO:0000049">
    <property type="term" value="F:tRNA binding"/>
    <property type="evidence" value="ECO:0007669"/>
    <property type="project" value="InterPro"/>
</dbReference>
<dbReference type="GO" id="GO:0008270">
    <property type="term" value="F:zinc ion binding"/>
    <property type="evidence" value="ECO:0007669"/>
    <property type="project" value="InterPro"/>
</dbReference>
<dbReference type="GO" id="GO:0006424">
    <property type="term" value="P:glutamyl-tRNA aminoacylation"/>
    <property type="evidence" value="ECO:0007669"/>
    <property type="project" value="UniProtKB-UniRule"/>
</dbReference>
<dbReference type="CDD" id="cd00808">
    <property type="entry name" value="GluRS_core"/>
    <property type="match status" value="1"/>
</dbReference>
<dbReference type="FunFam" id="1.10.10.350:FF:000002">
    <property type="entry name" value="Glutamate--tRNA ligase"/>
    <property type="match status" value="1"/>
</dbReference>
<dbReference type="FunFam" id="3.40.50.620:FF:000007">
    <property type="entry name" value="Glutamate--tRNA ligase"/>
    <property type="match status" value="1"/>
</dbReference>
<dbReference type="Gene3D" id="1.10.10.350">
    <property type="match status" value="1"/>
</dbReference>
<dbReference type="Gene3D" id="3.40.50.620">
    <property type="entry name" value="HUPs"/>
    <property type="match status" value="1"/>
</dbReference>
<dbReference type="HAMAP" id="MF_00022">
    <property type="entry name" value="Glu_tRNA_synth_type1"/>
    <property type="match status" value="1"/>
</dbReference>
<dbReference type="InterPro" id="IPR045462">
    <property type="entry name" value="aa-tRNA-synth_I_cd-bd"/>
</dbReference>
<dbReference type="InterPro" id="IPR020751">
    <property type="entry name" value="aa-tRNA-synth_I_codon-bd_sub2"/>
</dbReference>
<dbReference type="InterPro" id="IPR001412">
    <property type="entry name" value="aa-tRNA-synth_I_CS"/>
</dbReference>
<dbReference type="InterPro" id="IPR008925">
    <property type="entry name" value="aa_tRNA-synth_I_cd-bd_sf"/>
</dbReference>
<dbReference type="InterPro" id="IPR004527">
    <property type="entry name" value="Glu-tRNA-ligase_bac/mito"/>
</dbReference>
<dbReference type="InterPro" id="IPR000924">
    <property type="entry name" value="Glu/Gln-tRNA-synth"/>
</dbReference>
<dbReference type="InterPro" id="IPR020058">
    <property type="entry name" value="Glu/Gln-tRNA-synth_Ib_cat-dom"/>
</dbReference>
<dbReference type="InterPro" id="IPR049940">
    <property type="entry name" value="GluQ/Sye"/>
</dbReference>
<dbReference type="InterPro" id="IPR033910">
    <property type="entry name" value="GluRS_core"/>
</dbReference>
<dbReference type="InterPro" id="IPR014729">
    <property type="entry name" value="Rossmann-like_a/b/a_fold"/>
</dbReference>
<dbReference type="NCBIfam" id="TIGR00464">
    <property type="entry name" value="gltX_bact"/>
    <property type="match status" value="1"/>
</dbReference>
<dbReference type="PANTHER" id="PTHR43311">
    <property type="entry name" value="GLUTAMATE--TRNA LIGASE"/>
    <property type="match status" value="1"/>
</dbReference>
<dbReference type="PANTHER" id="PTHR43311:SF2">
    <property type="entry name" value="GLUTAMATE--TRNA LIGASE, MITOCHONDRIAL-RELATED"/>
    <property type="match status" value="1"/>
</dbReference>
<dbReference type="Pfam" id="PF19269">
    <property type="entry name" value="Anticodon_2"/>
    <property type="match status" value="1"/>
</dbReference>
<dbReference type="Pfam" id="PF00749">
    <property type="entry name" value="tRNA-synt_1c"/>
    <property type="match status" value="1"/>
</dbReference>
<dbReference type="PRINTS" id="PR00987">
    <property type="entry name" value="TRNASYNTHGLU"/>
</dbReference>
<dbReference type="SUPFAM" id="SSF48163">
    <property type="entry name" value="An anticodon-binding domain of class I aminoacyl-tRNA synthetases"/>
    <property type="match status" value="1"/>
</dbReference>
<dbReference type="SUPFAM" id="SSF52374">
    <property type="entry name" value="Nucleotidylyl transferase"/>
    <property type="match status" value="1"/>
</dbReference>
<dbReference type="PROSITE" id="PS00178">
    <property type="entry name" value="AA_TRNA_LIGASE_I"/>
    <property type="match status" value="1"/>
</dbReference>
<gene>
    <name evidence="1" type="primary">gltX</name>
    <name type="ordered locus">SAS0485</name>
</gene>
<reference key="1">
    <citation type="journal article" date="2004" name="Proc. Natl. Acad. Sci. U.S.A.">
        <title>Complete genomes of two clinical Staphylococcus aureus strains: evidence for the rapid evolution of virulence and drug resistance.</title>
        <authorList>
            <person name="Holden M.T.G."/>
            <person name="Feil E.J."/>
            <person name="Lindsay J.A."/>
            <person name="Peacock S.J."/>
            <person name="Day N.P.J."/>
            <person name="Enright M.C."/>
            <person name="Foster T.J."/>
            <person name="Moore C.E."/>
            <person name="Hurst L."/>
            <person name="Atkin R."/>
            <person name="Barron A."/>
            <person name="Bason N."/>
            <person name="Bentley S.D."/>
            <person name="Chillingworth C."/>
            <person name="Chillingworth T."/>
            <person name="Churcher C."/>
            <person name="Clark L."/>
            <person name="Corton C."/>
            <person name="Cronin A."/>
            <person name="Doggett J."/>
            <person name="Dowd L."/>
            <person name="Feltwell T."/>
            <person name="Hance Z."/>
            <person name="Harris B."/>
            <person name="Hauser H."/>
            <person name="Holroyd S."/>
            <person name="Jagels K."/>
            <person name="James K.D."/>
            <person name="Lennard N."/>
            <person name="Line A."/>
            <person name="Mayes R."/>
            <person name="Moule S."/>
            <person name="Mungall K."/>
            <person name="Ormond D."/>
            <person name="Quail M.A."/>
            <person name="Rabbinowitsch E."/>
            <person name="Rutherford K.M."/>
            <person name="Sanders M."/>
            <person name="Sharp S."/>
            <person name="Simmonds M."/>
            <person name="Stevens K."/>
            <person name="Whitehead S."/>
            <person name="Barrell B.G."/>
            <person name="Spratt B.G."/>
            <person name="Parkhill J."/>
        </authorList>
    </citation>
    <scope>NUCLEOTIDE SEQUENCE [LARGE SCALE GENOMIC DNA]</scope>
    <source>
        <strain>MSSA476</strain>
    </source>
</reference>
<keyword id="KW-0030">Aminoacyl-tRNA synthetase</keyword>
<keyword id="KW-0067">ATP-binding</keyword>
<keyword id="KW-0963">Cytoplasm</keyword>
<keyword id="KW-0436">Ligase</keyword>
<keyword id="KW-0547">Nucleotide-binding</keyword>
<keyword id="KW-0648">Protein biosynthesis</keyword>
<name>SYE_STAAS</name>
<proteinExistence type="inferred from homology"/>
<evidence type="ECO:0000255" key="1">
    <source>
        <dbReference type="HAMAP-Rule" id="MF_00022"/>
    </source>
</evidence>
<feature type="chain" id="PRO_0000119655" description="Glutamate--tRNA ligase">
    <location>
        <begin position="1"/>
        <end position="484"/>
    </location>
</feature>
<feature type="short sequence motif" description="'HIGH' region" evidence="1">
    <location>
        <begin position="11"/>
        <end position="21"/>
    </location>
</feature>
<feature type="short sequence motif" description="'KMSKS' region" evidence="1">
    <location>
        <begin position="252"/>
        <end position="256"/>
    </location>
</feature>
<feature type="binding site" evidence="1">
    <location>
        <position position="255"/>
    </location>
    <ligand>
        <name>ATP</name>
        <dbReference type="ChEBI" id="CHEBI:30616"/>
    </ligand>
</feature>
<organism>
    <name type="scientific">Staphylococcus aureus (strain MSSA476)</name>
    <dbReference type="NCBI Taxonomy" id="282459"/>
    <lineage>
        <taxon>Bacteria</taxon>
        <taxon>Bacillati</taxon>
        <taxon>Bacillota</taxon>
        <taxon>Bacilli</taxon>
        <taxon>Bacillales</taxon>
        <taxon>Staphylococcaceae</taxon>
        <taxon>Staphylococcus</taxon>
    </lineage>
</organism>
<comment type="function">
    <text evidence="1">Catalyzes the attachment of glutamate to tRNA(Glu) in a two-step reaction: glutamate is first activated by ATP to form Glu-AMP and then transferred to the acceptor end of tRNA(Glu).</text>
</comment>
<comment type="catalytic activity">
    <reaction evidence="1">
        <text>tRNA(Glu) + L-glutamate + ATP = L-glutamyl-tRNA(Glu) + AMP + diphosphate</text>
        <dbReference type="Rhea" id="RHEA:23540"/>
        <dbReference type="Rhea" id="RHEA-COMP:9663"/>
        <dbReference type="Rhea" id="RHEA-COMP:9680"/>
        <dbReference type="ChEBI" id="CHEBI:29985"/>
        <dbReference type="ChEBI" id="CHEBI:30616"/>
        <dbReference type="ChEBI" id="CHEBI:33019"/>
        <dbReference type="ChEBI" id="CHEBI:78442"/>
        <dbReference type="ChEBI" id="CHEBI:78520"/>
        <dbReference type="ChEBI" id="CHEBI:456215"/>
        <dbReference type="EC" id="6.1.1.17"/>
    </reaction>
</comment>
<comment type="subunit">
    <text evidence="1">Monomer.</text>
</comment>
<comment type="subcellular location">
    <subcellularLocation>
        <location evidence="1">Cytoplasm</location>
    </subcellularLocation>
</comment>
<comment type="similarity">
    <text evidence="1">Belongs to the class-I aminoacyl-tRNA synthetase family. Glutamate--tRNA ligase type 1 subfamily.</text>
</comment>